<comment type="function">
    <text evidence="1 11 12">Involved in an inositol phospholipid-based intracellular signaling cascade. Shows no PLC activity to phosphatidylinositol 4,5-bisphosphate and phosphatidylinositol. Component in the phospho-dependent endocytosis process of GABA A receptor. Acts as an inhibitor of PPP1C (By similarity). Involved in the assembly and/or the trafficking of gamma-2 subunit-containing GABA A receptors.</text>
</comment>
<comment type="subunit">
    <text evidence="1">Interacts with PPP2CA, Ins(1,4,5)P3, Ins(1,4,5,6)P4 GABARAP, GABA receptor beta subunits, GABA receptor gamma-2 subunits and PPP1C (By similarity). May form a ternary complex with GABA receptor beta subunit and GABARAP. The formation of a ternary complex with GABA receptor beta subunit and GABARAP could be the key step for facilitating the association of GABARAP with the GABA receptor gamma-2 subunit and to allow it to be transported at the right destination.</text>
</comment>
<comment type="subcellular location">
    <subcellularLocation>
        <location evidence="1">Cytoplasm</location>
    </subcellularLocation>
</comment>
<comment type="PTM">
    <text evidence="10">Phosphorylated by the catalytic subunit of PKA. Phosphorylation of Thr-94 resulted in dissociation of PPP1C from PRIP1.</text>
</comment>
<comment type="caution">
    <text evidence="13">In the PI-PLC X-box Asn-459 is present instead of the conserved His which is one of the active site residues. It is therefore expected that this protein lacks catalytic activity.</text>
</comment>
<evidence type="ECO:0000250" key="1"/>
<evidence type="ECO:0000250" key="2">
    <source>
        <dbReference type="UniProtKB" id="Q15111"/>
    </source>
</evidence>
<evidence type="ECO:0000250" key="3">
    <source>
        <dbReference type="UniProtKB" id="Q62688"/>
    </source>
</evidence>
<evidence type="ECO:0000255" key="4"/>
<evidence type="ECO:0000255" key="5">
    <source>
        <dbReference type="PROSITE-ProRule" id="PRU00041"/>
    </source>
</evidence>
<evidence type="ECO:0000255" key="6">
    <source>
        <dbReference type="PROSITE-ProRule" id="PRU00145"/>
    </source>
</evidence>
<evidence type="ECO:0000255" key="7">
    <source>
        <dbReference type="PROSITE-ProRule" id="PRU00270"/>
    </source>
</evidence>
<evidence type="ECO:0000255" key="8">
    <source>
        <dbReference type="PROSITE-ProRule" id="PRU00271"/>
    </source>
</evidence>
<evidence type="ECO:0000256" key="9">
    <source>
        <dbReference type="SAM" id="MobiDB-lite"/>
    </source>
</evidence>
<evidence type="ECO:0000269" key="10">
    <source>
    </source>
</evidence>
<evidence type="ECO:0000269" key="11">
    <source>
    </source>
</evidence>
<evidence type="ECO:0000269" key="12">
    <source>
    </source>
</evidence>
<evidence type="ECO:0000305" key="13"/>
<evidence type="ECO:0000305" key="14">
    <source>
    </source>
</evidence>
<evidence type="ECO:0007744" key="15">
    <source>
    </source>
</evidence>
<feature type="chain" id="PRO_0000319415" description="Inactive phospholipase C-like protein 1">
    <location>
        <begin position="1"/>
        <end position="1096"/>
    </location>
</feature>
<feature type="domain" description="PH" evidence="6">
    <location>
        <begin position="114"/>
        <end position="224"/>
    </location>
</feature>
<feature type="domain" description="PI-PLC X-box" evidence="7">
    <location>
        <begin position="399"/>
        <end position="543"/>
    </location>
</feature>
<feature type="domain" description="PI-PLC Y-box" evidence="8">
    <location>
        <begin position="586"/>
        <end position="702"/>
    </location>
</feature>
<feature type="domain" description="C2" evidence="5">
    <location>
        <begin position="702"/>
        <end position="831"/>
    </location>
</feature>
<feature type="region of interest" description="Disordered" evidence="9">
    <location>
        <begin position="1"/>
        <end position="101"/>
    </location>
</feature>
<feature type="region of interest" description="Interaction with PPP1C" evidence="1">
    <location>
        <begin position="83"/>
        <end position="222"/>
    </location>
</feature>
<feature type="region of interest" description="Interaction with GABA A beta subunit" evidence="1">
    <location>
        <begin position="544"/>
        <end position="568"/>
    </location>
</feature>
<feature type="region of interest" description="Disordered" evidence="9">
    <location>
        <begin position="550"/>
        <end position="569"/>
    </location>
</feature>
<feature type="region of interest" description="Disordered" evidence="9">
    <location>
        <begin position="1067"/>
        <end position="1096"/>
    </location>
</feature>
<feature type="coiled-coil region" evidence="4">
    <location>
        <begin position="1040"/>
        <end position="1060"/>
    </location>
</feature>
<feature type="compositionally biased region" description="Low complexity" evidence="9">
    <location>
        <begin position="49"/>
        <end position="60"/>
    </location>
</feature>
<feature type="compositionally biased region" description="Acidic residues" evidence="9">
    <location>
        <begin position="550"/>
        <end position="563"/>
    </location>
</feature>
<feature type="compositionally biased region" description="Basic and acidic residues" evidence="9">
    <location>
        <begin position="1075"/>
        <end position="1096"/>
    </location>
</feature>
<feature type="modified residue" description="Phosphoserine" evidence="15">
    <location>
        <position position="48"/>
    </location>
</feature>
<feature type="modified residue" description="Phosphoserine" evidence="2">
    <location>
        <position position="78"/>
    </location>
</feature>
<feature type="modified residue" description="Phosphothreonine" evidence="15">
    <location>
        <position position="94"/>
    </location>
</feature>
<feature type="modified residue" description="Phosphothreonine; by PKA" evidence="14 15">
    <location>
        <position position="94"/>
    </location>
</feature>
<feature type="modified residue" description="Phosphoserine; by PKA" evidence="14">
    <location>
        <position position="96"/>
    </location>
</feature>
<feature type="modified residue" description="Phosphothreonine" evidence="15">
    <location>
        <position position="557"/>
    </location>
</feature>
<feature type="modified residue" description="Phosphoserine" evidence="3">
    <location>
        <position position="570"/>
    </location>
</feature>
<feature type="modified residue" description="Phosphoserine" evidence="3">
    <location>
        <position position="1080"/>
    </location>
</feature>
<feature type="mutagenesis site" description="Decreased level of phosphorylation. Loss of phosphorylation; when associated with A-96." evidence="10">
    <original>T</original>
    <variation>A</variation>
    <location>
        <position position="94"/>
    </location>
</feature>
<feature type="mutagenesis site" description="Decreased level of phosphorylation. Loss of phosphorylation; when associated with A-94." evidence="10">
    <original>S</original>
    <variation>A</variation>
    <location>
        <position position="96"/>
    </location>
</feature>
<feature type="sequence conflict" description="In Ref. 1; BAE36646." evidence="13" ref="1">
    <original>M</original>
    <variation>I</variation>
    <location>
        <position position="116"/>
    </location>
</feature>
<feature type="sequence conflict" description="In Ref. 1; BAE24416." evidence="13" ref="1">
    <original>D</original>
    <variation>N</variation>
    <location>
        <position position="963"/>
    </location>
</feature>
<sequence>MAEGAASREAPAPLDVAGGEDDPRAGADAASGDAPPPALGGRMRDRRSGVALPGAAGVPADSEAGLLEAARATPRRSSIIKDPSNQKCGGRKKTVSFSSMPSEKKISSAHDCISFMQAGCELKKVRPNSRIYNRFFTLDTDLQALRWEPSKKDLEKAKLDISAIKEIRLGKNTETFRNNGLADQICEDCAFSILHGENYESLDLVANSADVANIWVSGLRYLVSRSKQPLDFIEGNQNTPRFMWLKTVFEAADVDGNGIMLEDTSVELIKQLNPTLKESKIRLKFKEIQKSKEKLTTRVTEEEFCEAFCELCTRPEVYFLLVQISKNKEYLDANDLMLFLEAEQGVTHITEDMCLDIIRRYELSEDGRQKGFLAIDGFTQYLLSPECDIFDPEQKKVAQDMTQPLSHYYINASHNTYLIEDQFRGPADINGYVRALKMGCRSIELDVSDGPDNEPILCNRNNMAMHLSFRSVLEVINKFAFVASEYPLILCLGNHCSLPQQKVMAQQMKKVFGEKLYTEAPLSSESYLPSPEKLKNMIIVKGKKLPSESDLLEGEVTDEDEEAEMSRRMSGDYNGEQKHIWLCRELSDLVSICKSVQHRDFELSMKTQNYWEMCSFSETEASRIANEYPEDFVNYNKKFLSRVYPSAMRIDSSNLNPQDFWNCGCQIVAMNFQTPGPMMDLHTGWFLQNGGCGYVLRPSIMRDEVSYFSANTKGIVPGVSPLVLHIKIISGQNFPKPKGACAKGDVIDPYVCVEIHGIPADCCEQRTKTVQQNSDNPIFDETFEFQVNLPELTMVRFVILDDDYIGDEFIGQYTIPFECLQPGYRHVPLRSFVGDIMEHVTLFVHIAITNRSGGGKPQKRSLSVRMGKKVREYTMLRNIGLKTIDDIFKIAVHPLREAIDMRENMQNAIVSVKELCGLPPIASLKQCLLTLSSRLITSDSTPSVSLVMKDCFPYLEPLGAIPDVQKRMLAAYDLMIQESRVLIEMADTVQEKIVQCQKAGMEFHEELHNLGAKEGLKGRKLNKAIESFAWNITVLKGQGDLLKNAKNEAVENIKQIQLACLSCGLSKGPGGGSEAKGKRSLEAIEEKESSEENGKL</sequence>
<name>PLCL1_MOUSE</name>
<keyword id="KW-0175">Coiled coil</keyword>
<keyword id="KW-0963">Cytoplasm</keyword>
<keyword id="KW-0597">Phosphoprotein</keyword>
<keyword id="KW-1185">Reference proteome</keyword>
<keyword id="KW-0807">Transducer</keyword>
<organism>
    <name type="scientific">Mus musculus</name>
    <name type="common">Mouse</name>
    <dbReference type="NCBI Taxonomy" id="10090"/>
    <lineage>
        <taxon>Eukaryota</taxon>
        <taxon>Metazoa</taxon>
        <taxon>Chordata</taxon>
        <taxon>Craniata</taxon>
        <taxon>Vertebrata</taxon>
        <taxon>Euteleostomi</taxon>
        <taxon>Mammalia</taxon>
        <taxon>Eutheria</taxon>
        <taxon>Euarchontoglires</taxon>
        <taxon>Glires</taxon>
        <taxon>Rodentia</taxon>
        <taxon>Myomorpha</taxon>
        <taxon>Muroidea</taxon>
        <taxon>Muridae</taxon>
        <taxon>Murinae</taxon>
        <taxon>Mus</taxon>
        <taxon>Mus</taxon>
    </lineage>
</organism>
<proteinExistence type="evidence at protein level"/>
<protein>
    <recommendedName>
        <fullName>Inactive phospholipase C-like protein 1</fullName>
        <shortName>PLC-L1</shortName>
    </recommendedName>
    <alternativeName>
        <fullName>Phospholipase C-related but catalytically inactive protein</fullName>
        <shortName>PRIP</shortName>
    </alternativeName>
</protein>
<dbReference type="EMBL" id="AK140530">
    <property type="protein sequence ID" value="BAE24416.1"/>
    <property type="molecule type" value="mRNA"/>
</dbReference>
<dbReference type="EMBL" id="AK161943">
    <property type="protein sequence ID" value="BAE36646.1"/>
    <property type="molecule type" value="mRNA"/>
</dbReference>
<dbReference type="EMBL" id="AC099696">
    <property type="status" value="NOT_ANNOTATED_CDS"/>
    <property type="molecule type" value="Genomic_DNA"/>
</dbReference>
<dbReference type="EMBL" id="AC145691">
    <property type="status" value="NOT_ANNOTATED_CDS"/>
    <property type="molecule type" value="Genomic_DNA"/>
</dbReference>
<dbReference type="EMBL" id="AC165413">
    <property type="status" value="NOT_ANNOTATED_CDS"/>
    <property type="molecule type" value="Genomic_DNA"/>
</dbReference>
<dbReference type="CCDS" id="CCDS48263.1"/>
<dbReference type="RefSeq" id="NP_001108135.1">
    <property type="nucleotide sequence ID" value="NM_001114663.1"/>
</dbReference>
<dbReference type="SMR" id="Q3USB7"/>
<dbReference type="BioGRID" id="230595">
    <property type="interactions" value="3"/>
</dbReference>
<dbReference type="FunCoup" id="Q3USB7">
    <property type="interactions" value="131"/>
</dbReference>
<dbReference type="IntAct" id="Q3USB7">
    <property type="interactions" value="2"/>
</dbReference>
<dbReference type="MINT" id="Q3USB7"/>
<dbReference type="STRING" id="10090.ENSMUSP00000037854"/>
<dbReference type="GlyGen" id="Q3USB7">
    <property type="glycosylation" value="1 site"/>
</dbReference>
<dbReference type="iPTMnet" id="Q3USB7"/>
<dbReference type="PhosphoSitePlus" id="Q3USB7"/>
<dbReference type="SwissPalm" id="Q3USB7"/>
<dbReference type="jPOST" id="Q3USB7"/>
<dbReference type="PaxDb" id="10090-ENSMUSP00000037854"/>
<dbReference type="PeptideAtlas" id="Q3USB7"/>
<dbReference type="ProteomicsDB" id="289616"/>
<dbReference type="Antibodypedia" id="34073">
    <property type="antibodies" value="146 antibodies from 25 providers"/>
</dbReference>
<dbReference type="DNASU" id="227120"/>
<dbReference type="Ensembl" id="ENSMUST00000042986.10">
    <property type="protein sequence ID" value="ENSMUSP00000037854.9"/>
    <property type="gene ID" value="ENSMUSG00000038349.11"/>
</dbReference>
<dbReference type="GeneID" id="227120"/>
<dbReference type="KEGG" id="mmu:227120"/>
<dbReference type="UCSC" id="uc007ban.2">
    <property type="organism name" value="mouse"/>
</dbReference>
<dbReference type="AGR" id="MGI:3036262"/>
<dbReference type="CTD" id="5334"/>
<dbReference type="MGI" id="MGI:3036262">
    <property type="gene designation" value="Plcl1"/>
</dbReference>
<dbReference type="VEuPathDB" id="HostDB:ENSMUSG00000038349"/>
<dbReference type="eggNOG" id="KOG0169">
    <property type="taxonomic scope" value="Eukaryota"/>
</dbReference>
<dbReference type="GeneTree" id="ENSGT00940000158407"/>
<dbReference type="HOGENOM" id="CLU_002738_0_1_1"/>
<dbReference type="InParanoid" id="Q3USB7"/>
<dbReference type="OMA" id="FLWVYTH"/>
<dbReference type="OrthoDB" id="269822at2759"/>
<dbReference type="PhylomeDB" id="Q3USB7"/>
<dbReference type="TreeFam" id="TF313216"/>
<dbReference type="BioGRID-ORCS" id="227120">
    <property type="hits" value="2 hits in 80 CRISPR screens"/>
</dbReference>
<dbReference type="ChiTaRS" id="Plcl1">
    <property type="organism name" value="mouse"/>
</dbReference>
<dbReference type="PRO" id="PR:Q3USB7"/>
<dbReference type="Proteomes" id="UP000000589">
    <property type="component" value="Chromosome 1"/>
</dbReference>
<dbReference type="RNAct" id="Q3USB7">
    <property type="molecule type" value="protein"/>
</dbReference>
<dbReference type="Bgee" id="ENSMUSG00000038349">
    <property type="expression patterns" value="Expressed in lumbar subsegment of spinal cord and 195 other cell types or tissues"/>
</dbReference>
<dbReference type="GO" id="GO:0005737">
    <property type="term" value="C:cytoplasm"/>
    <property type="evidence" value="ECO:0007669"/>
    <property type="project" value="UniProtKB-SubCell"/>
</dbReference>
<dbReference type="GO" id="GO:0050811">
    <property type="term" value="F:GABA receptor binding"/>
    <property type="evidence" value="ECO:0000266"/>
    <property type="project" value="MGI"/>
</dbReference>
<dbReference type="GO" id="GO:0004435">
    <property type="term" value="F:phosphatidylinositol-4,5-bisphosphate phospholipase C activity"/>
    <property type="evidence" value="ECO:0007669"/>
    <property type="project" value="InterPro"/>
</dbReference>
<dbReference type="GO" id="GO:0007214">
    <property type="term" value="P:gamma-aminobutyric acid signaling pathway"/>
    <property type="evidence" value="ECO:0000316"/>
    <property type="project" value="MGI"/>
</dbReference>
<dbReference type="GO" id="GO:0035556">
    <property type="term" value="P:intracellular signal transduction"/>
    <property type="evidence" value="ECO:0007669"/>
    <property type="project" value="InterPro"/>
</dbReference>
<dbReference type="GO" id="GO:0006629">
    <property type="term" value="P:lipid metabolic process"/>
    <property type="evidence" value="ECO:0007669"/>
    <property type="project" value="InterPro"/>
</dbReference>
<dbReference type="GO" id="GO:0120163">
    <property type="term" value="P:negative regulation of cold-induced thermogenesis"/>
    <property type="evidence" value="ECO:0000316"/>
    <property type="project" value="YuBioLab"/>
</dbReference>
<dbReference type="GO" id="GO:0032228">
    <property type="term" value="P:regulation of synaptic transmission, GABAergic"/>
    <property type="evidence" value="ECO:0000315"/>
    <property type="project" value="MGI"/>
</dbReference>
<dbReference type="CDD" id="cd00275">
    <property type="entry name" value="C2_PLC_like"/>
    <property type="match status" value="1"/>
</dbReference>
<dbReference type="CDD" id="cd13364">
    <property type="entry name" value="PH_PLC_eta"/>
    <property type="match status" value="1"/>
</dbReference>
<dbReference type="CDD" id="cd08597">
    <property type="entry name" value="PI-PLCc_PRIP_metazoa"/>
    <property type="match status" value="1"/>
</dbReference>
<dbReference type="FunFam" id="1.10.238.10:FF:000005">
    <property type="entry name" value="Phosphoinositide phospholipase C"/>
    <property type="match status" value="1"/>
</dbReference>
<dbReference type="FunFam" id="2.30.29.30:FF:000025">
    <property type="entry name" value="Phosphoinositide phospholipase C"/>
    <property type="match status" value="1"/>
</dbReference>
<dbReference type="FunFam" id="2.60.40.150:FF:000017">
    <property type="entry name" value="Phosphoinositide phospholipase C"/>
    <property type="match status" value="1"/>
</dbReference>
<dbReference type="FunFam" id="3.20.20.190:FF:000001">
    <property type="entry name" value="Phosphoinositide phospholipase C"/>
    <property type="match status" value="1"/>
</dbReference>
<dbReference type="Gene3D" id="2.60.40.150">
    <property type="entry name" value="C2 domain"/>
    <property type="match status" value="1"/>
</dbReference>
<dbReference type="Gene3D" id="1.10.238.10">
    <property type="entry name" value="EF-hand"/>
    <property type="match status" value="1"/>
</dbReference>
<dbReference type="Gene3D" id="3.20.20.190">
    <property type="entry name" value="Phosphatidylinositol (PI) phosphodiesterase"/>
    <property type="match status" value="1"/>
</dbReference>
<dbReference type="Gene3D" id="2.30.29.30">
    <property type="entry name" value="Pleckstrin-homology domain (PH domain)/Phosphotyrosine-binding domain (PTB)"/>
    <property type="match status" value="1"/>
</dbReference>
<dbReference type="InterPro" id="IPR000008">
    <property type="entry name" value="C2_dom"/>
</dbReference>
<dbReference type="InterPro" id="IPR035892">
    <property type="entry name" value="C2_domain_sf"/>
</dbReference>
<dbReference type="InterPro" id="IPR011992">
    <property type="entry name" value="EF-hand-dom_pair"/>
</dbReference>
<dbReference type="InterPro" id="IPR011993">
    <property type="entry name" value="PH-like_dom_sf"/>
</dbReference>
<dbReference type="InterPro" id="IPR001849">
    <property type="entry name" value="PH_domain"/>
</dbReference>
<dbReference type="InterPro" id="IPR001192">
    <property type="entry name" value="PI-PLC_fam"/>
</dbReference>
<dbReference type="InterPro" id="IPR017946">
    <property type="entry name" value="PLC-like_Pdiesterase_TIM-brl"/>
</dbReference>
<dbReference type="InterPro" id="IPR015359">
    <property type="entry name" value="PLC_EF-hand-like"/>
</dbReference>
<dbReference type="InterPro" id="IPR000909">
    <property type="entry name" value="PLipase_C_PInositol-sp_X_dom"/>
</dbReference>
<dbReference type="InterPro" id="IPR001711">
    <property type="entry name" value="PLipase_C_Pinositol-sp_Y"/>
</dbReference>
<dbReference type="PANTHER" id="PTHR10336:SF102">
    <property type="entry name" value="INACTIVE PHOSPHOLIPASE C-LIKE PROTEIN 1"/>
    <property type="match status" value="1"/>
</dbReference>
<dbReference type="PANTHER" id="PTHR10336">
    <property type="entry name" value="PHOSPHOINOSITIDE-SPECIFIC PHOSPHOLIPASE C FAMILY PROTEIN"/>
    <property type="match status" value="1"/>
</dbReference>
<dbReference type="Pfam" id="PF00168">
    <property type="entry name" value="C2"/>
    <property type="match status" value="1"/>
</dbReference>
<dbReference type="Pfam" id="PF09279">
    <property type="entry name" value="EF-hand_like"/>
    <property type="match status" value="1"/>
</dbReference>
<dbReference type="Pfam" id="PF16457">
    <property type="entry name" value="PH_12"/>
    <property type="match status" value="1"/>
</dbReference>
<dbReference type="Pfam" id="PF00388">
    <property type="entry name" value="PI-PLC-X"/>
    <property type="match status" value="1"/>
</dbReference>
<dbReference type="Pfam" id="PF00387">
    <property type="entry name" value="PI-PLC-Y"/>
    <property type="match status" value="1"/>
</dbReference>
<dbReference type="PRINTS" id="PR00390">
    <property type="entry name" value="PHPHLIPASEC"/>
</dbReference>
<dbReference type="SMART" id="SM00239">
    <property type="entry name" value="C2"/>
    <property type="match status" value="1"/>
</dbReference>
<dbReference type="SMART" id="SM00233">
    <property type="entry name" value="PH"/>
    <property type="match status" value="1"/>
</dbReference>
<dbReference type="SMART" id="SM00148">
    <property type="entry name" value="PLCXc"/>
    <property type="match status" value="1"/>
</dbReference>
<dbReference type="SMART" id="SM00149">
    <property type="entry name" value="PLCYc"/>
    <property type="match status" value="1"/>
</dbReference>
<dbReference type="SUPFAM" id="SSF49562">
    <property type="entry name" value="C2 domain (Calcium/lipid-binding domain, CaLB)"/>
    <property type="match status" value="1"/>
</dbReference>
<dbReference type="SUPFAM" id="SSF47473">
    <property type="entry name" value="EF-hand"/>
    <property type="match status" value="1"/>
</dbReference>
<dbReference type="SUPFAM" id="SSF50729">
    <property type="entry name" value="PH domain-like"/>
    <property type="match status" value="1"/>
</dbReference>
<dbReference type="SUPFAM" id="SSF51695">
    <property type="entry name" value="PLC-like phosphodiesterases"/>
    <property type="match status" value="1"/>
</dbReference>
<dbReference type="PROSITE" id="PS50004">
    <property type="entry name" value="C2"/>
    <property type="match status" value="1"/>
</dbReference>
<dbReference type="PROSITE" id="PS50003">
    <property type="entry name" value="PH_DOMAIN"/>
    <property type="match status" value="1"/>
</dbReference>
<dbReference type="PROSITE" id="PS50007">
    <property type="entry name" value="PIPLC_X_DOMAIN"/>
    <property type="match status" value="1"/>
</dbReference>
<dbReference type="PROSITE" id="PS50008">
    <property type="entry name" value="PIPLC_Y_DOMAIN"/>
    <property type="match status" value="1"/>
</dbReference>
<gene>
    <name type="primary">Plcl1</name>
</gene>
<reference key="1">
    <citation type="journal article" date="2005" name="Science">
        <title>The transcriptional landscape of the mammalian genome.</title>
        <authorList>
            <person name="Carninci P."/>
            <person name="Kasukawa T."/>
            <person name="Katayama S."/>
            <person name="Gough J."/>
            <person name="Frith M.C."/>
            <person name="Maeda N."/>
            <person name="Oyama R."/>
            <person name="Ravasi T."/>
            <person name="Lenhard B."/>
            <person name="Wells C."/>
            <person name="Kodzius R."/>
            <person name="Shimokawa K."/>
            <person name="Bajic V.B."/>
            <person name="Brenner S.E."/>
            <person name="Batalov S."/>
            <person name="Forrest A.R."/>
            <person name="Zavolan M."/>
            <person name="Davis M.J."/>
            <person name="Wilming L.G."/>
            <person name="Aidinis V."/>
            <person name="Allen J.E."/>
            <person name="Ambesi-Impiombato A."/>
            <person name="Apweiler R."/>
            <person name="Aturaliya R.N."/>
            <person name="Bailey T.L."/>
            <person name="Bansal M."/>
            <person name="Baxter L."/>
            <person name="Beisel K.W."/>
            <person name="Bersano T."/>
            <person name="Bono H."/>
            <person name="Chalk A.M."/>
            <person name="Chiu K.P."/>
            <person name="Choudhary V."/>
            <person name="Christoffels A."/>
            <person name="Clutterbuck D.R."/>
            <person name="Crowe M.L."/>
            <person name="Dalla E."/>
            <person name="Dalrymple B.P."/>
            <person name="de Bono B."/>
            <person name="Della Gatta G."/>
            <person name="di Bernardo D."/>
            <person name="Down T."/>
            <person name="Engstrom P."/>
            <person name="Fagiolini M."/>
            <person name="Faulkner G."/>
            <person name="Fletcher C.F."/>
            <person name="Fukushima T."/>
            <person name="Furuno M."/>
            <person name="Futaki S."/>
            <person name="Gariboldi M."/>
            <person name="Georgii-Hemming P."/>
            <person name="Gingeras T.R."/>
            <person name="Gojobori T."/>
            <person name="Green R.E."/>
            <person name="Gustincich S."/>
            <person name="Harbers M."/>
            <person name="Hayashi Y."/>
            <person name="Hensch T.K."/>
            <person name="Hirokawa N."/>
            <person name="Hill D."/>
            <person name="Huminiecki L."/>
            <person name="Iacono M."/>
            <person name="Ikeo K."/>
            <person name="Iwama A."/>
            <person name="Ishikawa T."/>
            <person name="Jakt M."/>
            <person name="Kanapin A."/>
            <person name="Katoh M."/>
            <person name="Kawasawa Y."/>
            <person name="Kelso J."/>
            <person name="Kitamura H."/>
            <person name="Kitano H."/>
            <person name="Kollias G."/>
            <person name="Krishnan S.P."/>
            <person name="Kruger A."/>
            <person name="Kummerfeld S.K."/>
            <person name="Kurochkin I.V."/>
            <person name="Lareau L.F."/>
            <person name="Lazarevic D."/>
            <person name="Lipovich L."/>
            <person name="Liu J."/>
            <person name="Liuni S."/>
            <person name="McWilliam S."/>
            <person name="Madan Babu M."/>
            <person name="Madera M."/>
            <person name="Marchionni L."/>
            <person name="Matsuda H."/>
            <person name="Matsuzawa S."/>
            <person name="Miki H."/>
            <person name="Mignone F."/>
            <person name="Miyake S."/>
            <person name="Morris K."/>
            <person name="Mottagui-Tabar S."/>
            <person name="Mulder N."/>
            <person name="Nakano N."/>
            <person name="Nakauchi H."/>
            <person name="Ng P."/>
            <person name="Nilsson R."/>
            <person name="Nishiguchi S."/>
            <person name="Nishikawa S."/>
            <person name="Nori F."/>
            <person name="Ohara O."/>
            <person name="Okazaki Y."/>
            <person name="Orlando V."/>
            <person name="Pang K.C."/>
            <person name="Pavan W.J."/>
            <person name="Pavesi G."/>
            <person name="Pesole G."/>
            <person name="Petrovsky N."/>
            <person name="Piazza S."/>
            <person name="Reed J."/>
            <person name="Reid J.F."/>
            <person name="Ring B.Z."/>
            <person name="Ringwald M."/>
            <person name="Rost B."/>
            <person name="Ruan Y."/>
            <person name="Salzberg S.L."/>
            <person name="Sandelin A."/>
            <person name="Schneider C."/>
            <person name="Schoenbach C."/>
            <person name="Sekiguchi K."/>
            <person name="Semple C.A."/>
            <person name="Seno S."/>
            <person name="Sessa L."/>
            <person name="Sheng Y."/>
            <person name="Shibata Y."/>
            <person name="Shimada H."/>
            <person name="Shimada K."/>
            <person name="Silva D."/>
            <person name="Sinclair B."/>
            <person name="Sperling S."/>
            <person name="Stupka E."/>
            <person name="Sugiura K."/>
            <person name="Sultana R."/>
            <person name="Takenaka Y."/>
            <person name="Taki K."/>
            <person name="Tammoja K."/>
            <person name="Tan S.L."/>
            <person name="Tang S."/>
            <person name="Taylor M.S."/>
            <person name="Tegner J."/>
            <person name="Teichmann S.A."/>
            <person name="Ueda H.R."/>
            <person name="van Nimwegen E."/>
            <person name="Verardo R."/>
            <person name="Wei C.L."/>
            <person name="Yagi K."/>
            <person name="Yamanishi H."/>
            <person name="Zabarovsky E."/>
            <person name="Zhu S."/>
            <person name="Zimmer A."/>
            <person name="Hide W."/>
            <person name="Bult C."/>
            <person name="Grimmond S.M."/>
            <person name="Teasdale R.D."/>
            <person name="Liu E.T."/>
            <person name="Brusic V."/>
            <person name="Quackenbush J."/>
            <person name="Wahlestedt C."/>
            <person name="Mattick J.S."/>
            <person name="Hume D.A."/>
            <person name="Kai C."/>
            <person name="Sasaki D."/>
            <person name="Tomaru Y."/>
            <person name="Fukuda S."/>
            <person name="Kanamori-Katayama M."/>
            <person name="Suzuki M."/>
            <person name="Aoki J."/>
            <person name="Arakawa T."/>
            <person name="Iida J."/>
            <person name="Imamura K."/>
            <person name="Itoh M."/>
            <person name="Kato T."/>
            <person name="Kawaji H."/>
            <person name="Kawagashira N."/>
            <person name="Kawashima T."/>
            <person name="Kojima M."/>
            <person name="Kondo S."/>
            <person name="Konno H."/>
            <person name="Nakano K."/>
            <person name="Ninomiya N."/>
            <person name="Nishio T."/>
            <person name="Okada M."/>
            <person name="Plessy C."/>
            <person name="Shibata K."/>
            <person name="Shiraki T."/>
            <person name="Suzuki S."/>
            <person name="Tagami M."/>
            <person name="Waki K."/>
            <person name="Watahiki A."/>
            <person name="Okamura-Oho Y."/>
            <person name="Suzuki H."/>
            <person name="Kawai J."/>
            <person name="Hayashizaki Y."/>
        </authorList>
    </citation>
    <scope>NUCLEOTIDE SEQUENCE [LARGE SCALE MRNA]</scope>
    <source>
        <strain>C57BL/6J</strain>
        <tissue>Cerebellum</tissue>
        <tissue>Olfactory bulb</tissue>
    </source>
</reference>
<reference key="2">
    <citation type="journal article" date="2009" name="PLoS Biol.">
        <title>Lineage-specific biology revealed by a finished genome assembly of the mouse.</title>
        <authorList>
            <person name="Church D.M."/>
            <person name="Goodstadt L."/>
            <person name="Hillier L.W."/>
            <person name="Zody M.C."/>
            <person name="Goldstein S."/>
            <person name="She X."/>
            <person name="Bult C.J."/>
            <person name="Agarwala R."/>
            <person name="Cherry J.L."/>
            <person name="DiCuccio M."/>
            <person name="Hlavina W."/>
            <person name="Kapustin Y."/>
            <person name="Meric P."/>
            <person name="Maglott D."/>
            <person name="Birtle Z."/>
            <person name="Marques A.C."/>
            <person name="Graves T."/>
            <person name="Zhou S."/>
            <person name="Teague B."/>
            <person name="Potamousis K."/>
            <person name="Churas C."/>
            <person name="Place M."/>
            <person name="Herschleb J."/>
            <person name="Runnheim R."/>
            <person name="Forrest D."/>
            <person name="Amos-Landgraf J."/>
            <person name="Schwartz D.C."/>
            <person name="Cheng Z."/>
            <person name="Lindblad-Toh K."/>
            <person name="Eichler E.E."/>
            <person name="Ponting C.P."/>
        </authorList>
    </citation>
    <scope>NUCLEOTIDE SEQUENCE [LARGE SCALE GENOMIC DNA]</scope>
    <source>
        <strain>C57BL/6J</strain>
    </source>
</reference>
<reference key="3">
    <citation type="journal article" date="2004" name="J. Neurosci.">
        <title>GABAA receptor phospho-dependent modulation is regulated by phospholipase C-related inactive protein type 1, a novel protein phosphatase 1 anchoring protein.</title>
        <authorList>
            <person name="Terunuma M."/>
            <person name="Jang I.S."/>
            <person name="Ha S.H."/>
            <person name="Kittler J.T."/>
            <person name="Kanematsu T."/>
            <person name="Jovanovic J.N."/>
            <person name="Nakayama K.I."/>
            <person name="Akaike N."/>
            <person name="Ryu S.H."/>
            <person name="Moss S.J."/>
            <person name="Hirata M."/>
        </authorList>
    </citation>
    <scope>PHOSPHORYLATION AT THR-94 AND SER-96</scope>
    <scope>MUTAGENESIS OF THR-94 AND SER-96</scope>
</reference>
<reference key="4">
    <citation type="journal article" date="2006" name="Adv. Enzyme Regul.">
        <title>Protein phosphatase regulation by PRIP, a PLC-related catalytically inactive protein -- implications in the phospho-modulation of the GABAA receptor.</title>
        <authorList>
            <person name="Yanagihori S."/>
            <person name="Terunuma M."/>
            <person name="Koyano K."/>
            <person name="Kanematsu T."/>
            <person name="Ho Ryu S."/>
            <person name="Hirata M."/>
        </authorList>
    </citation>
    <scope>FUNCTION</scope>
</reference>
<reference key="5">
    <citation type="journal article" date="2007" name="J. Neurosci.">
        <title>Phospholipase C-related inactive protein is involved in trafficking of gamma2 subunit-containing GABA(A) receptors to the cell surface.</title>
        <authorList>
            <person name="Mizokami A."/>
            <person name="Kanematsu T."/>
            <person name="Ishibashi H."/>
            <person name="Yamaguchi T."/>
            <person name="Tanida I."/>
            <person name="Takenaka K."/>
            <person name="Nakayama K.I."/>
            <person name="Fukami K."/>
            <person name="Takenawa T."/>
            <person name="Kominami E."/>
            <person name="Moss S.J."/>
            <person name="Yamamoto T."/>
            <person name="Nabekura J."/>
            <person name="Hirata M."/>
        </authorList>
    </citation>
    <scope>FUNCTION</scope>
</reference>
<reference key="6">
    <citation type="journal article" date="2010" name="Cell">
        <title>A tissue-specific atlas of mouse protein phosphorylation and expression.</title>
        <authorList>
            <person name="Huttlin E.L."/>
            <person name="Jedrychowski M.P."/>
            <person name="Elias J.E."/>
            <person name="Goswami T."/>
            <person name="Rad R."/>
            <person name="Beausoleil S.A."/>
            <person name="Villen J."/>
            <person name="Haas W."/>
            <person name="Sowa M.E."/>
            <person name="Gygi S.P."/>
        </authorList>
    </citation>
    <scope>PHOSPHORYLATION [LARGE SCALE ANALYSIS] AT SER-48; THR-94 AND THR-557</scope>
    <scope>IDENTIFICATION BY MASS SPECTROMETRY [LARGE SCALE ANALYSIS]</scope>
    <source>
        <tissue>Brain</tissue>
        <tissue>Brown adipose tissue</tissue>
        <tissue>Heart</tissue>
        <tissue>Kidney</tissue>
        <tissue>Lung</tissue>
        <tissue>Spleen</tissue>
    </source>
</reference>
<accession>Q3USB7</accession>
<accession>D3Z0W5</accession>
<accession>Q3TSM9</accession>